<reference key="1">
    <citation type="journal article" date="2010" name="PLoS Genet.">
        <title>Genome sequence of the plant growth promoting endophytic bacterium Enterobacter sp. 638.</title>
        <authorList>
            <person name="Taghavi S."/>
            <person name="van der Lelie D."/>
            <person name="Hoffman A."/>
            <person name="Zhang Y.B."/>
            <person name="Walla M.D."/>
            <person name="Vangronsveld J."/>
            <person name="Newman L."/>
            <person name="Monchy S."/>
        </authorList>
    </citation>
    <scope>NUCLEOTIDE SEQUENCE [LARGE SCALE GENOMIC DNA]</scope>
    <source>
        <strain>638</strain>
    </source>
</reference>
<keyword id="KW-0687">Ribonucleoprotein</keyword>
<keyword id="KW-0689">Ribosomal protein</keyword>
<protein>
    <recommendedName>
        <fullName evidence="1">Large ribosomal subunit protein bL12</fullName>
    </recommendedName>
    <alternativeName>
        <fullName evidence="2">50S ribosomal protein L7/L12</fullName>
    </alternativeName>
</protein>
<accession>A4W5A6</accession>
<evidence type="ECO:0000255" key="1">
    <source>
        <dbReference type="HAMAP-Rule" id="MF_00368"/>
    </source>
</evidence>
<evidence type="ECO:0000305" key="2"/>
<gene>
    <name evidence="1" type="primary">rplL</name>
    <name type="ordered locus">Ent638_0196</name>
</gene>
<sequence>MSITKDQIIEAVAAMSVMDVVELISAMEEKFGVSAAAAVAVAAGPAEAAEEKTEFDVILKGIGANKVAVIKAVRGATGLGLKEAKDLVESAPAALKEGVSKDDAEALKKSLEEAGAEVEVK</sequence>
<organism>
    <name type="scientific">Enterobacter sp. (strain 638)</name>
    <dbReference type="NCBI Taxonomy" id="399742"/>
    <lineage>
        <taxon>Bacteria</taxon>
        <taxon>Pseudomonadati</taxon>
        <taxon>Pseudomonadota</taxon>
        <taxon>Gammaproteobacteria</taxon>
        <taxon>Enterobacterales</taxon>
        <taxon>Enterobacteriaceae</taxon>
        <taxon>Enterobacter</taxon>
    </lineage>
</organism>
<proteinExistence type="inferred from homology"/>
<name>RL7_ENT38</name>
<feature type="chain" id="PRO_1000059925" description="Large ribosomal subunit protein bL12">
    <location>
        <begin position="1"/>
        <end position="121"/>
    </location>
</feature>
<dbReference type="EMBL" id="CP000653">
    <property type="protein sequence ID" value="ABP58886.1"/>
    <property type="molecule type" value="Genomic_DNA"/>
</dbReference>
<dbReference type="RefSeq" id="WP_011915460.1">
    <property type="nucleotide sequence ID" value="NC_009436.1"/>
</dbReference>
<dbReference type="SMR" id="A4W5A6"/>
<dbReference type="STRING" id="399742.Ent638_0196"/>
<dbReference type="GeneID" id="93307375"/>
<dbReference type="KEGG" id="ent:Ent638_0196"/>
<dbReference type="eggNOG" id="COG0222">
    <property type="taxonomic scope" value="Bacteria"/>
</dbReference>
<dbReference type="HOGENOM" id="CLU_086499_3_2_6"/>
<dbReference type="OrthoDB" id="9811748at2"/>
<dbReference type="Proteomes" id="UP000000230">
    <property type="component" value="Chromosome"/>
</dbReference>
<dbReference type="GO" id="GO:0022625">
    <property type="term" value="C:cytosolic large ribosomal subunit"/>
    <property type="evidence" value="ECO:0007669"/>
    <property type="project" value="TreeGrafter"/>
</dbReference>
<dbReference type="GO" id="GO:0003729">
    <property type="term" value="F:mRNA binding"/>
    <property type="evidence" value="ECO:0007669"/>
    <property type="project" value="TreeGrafter"/>
</dbReference>
<dbReference type="GO" id="GO:0003735">
    <property type="term" value="F:structural constituent of ribosome"/>
    <property type="evidence" value="ECO:0007669"/>
    <property type="project" value="InterPro"/>
</dbReference>
<dbReference type="GO" id="GO:0006412">
    <property type="term" value="P:translation"/>
    <property type="evidence" value="ECO:0007669"/>
    <property type="project" value="UniProtKB-UniRule"/>
</dbReference>
<dbReference type="CDD" id="cd00387">
    <property type="entry name" value="Ribosomal_L7_L12"/>
    <property type="match status" value="1"/>
</dbReference>
<dbReference type="FunFam" id="1.20.5.710:FF:000001">
    <property type="entry name" value="50S ribosomal protein L7/L12"/>
    <property type="match status" value="1"/>
</dbReference>
<dbReference type="FunFam" id="3.30.1390.10:FF:000001">
    <property type="entry name" value="50S ribosomal protein L7/L12"/>
    <property type="match status" value="1"/>
</dbReference>
<dbReference type="Gene3D" id="3.30.1390.10">
    <property type="match status" value="1"/>
</dbReference>
<dbReference type="Gene3D" id="1.20.5.710">
    <property type="entry name" value="Single helix bin"/>
    <property type="match status" value="1"/>
</dbReference>
<dbReference type="HAMAP" id="MF_00368">
    <property type="entry name" value="Ribosomal_bL12"/>
    <property type="match status" value="1"/>
</dbReference>
<dbReference type="InterPro" id="IPR000206">
    <property type="entry name" value="Ribosomal_bL12"/>
</dbReference>
<dbReference type="InterPro" id="IPR013823">
    <property type="entry name" value="Ribosomal_bL12_C"/>
</dbReference>
<dbReference type="InterPro" id="IPR014719">
    <property type="entry name" value="Ribosomal_bL12_C/ClpS-like"/>
</dbReference>
<dbReference type="InterPro" id="IPR008932">
    <property type="entry name" value="Ribosomal_bL12_oligo"/>
</dbReference>
<dbReference type="InterPro" id="IPR036235">
    <property type="entry name" value="Ribosomal_bL12_oligo_N_sf"/>
</dbReference>
<dbReference type="NCBIfam" id="TIGR00855">
    <property type="entry name" value="L12"/>
    <property type="match status" value="1"/>
</dbReference>
<dbReference type="PANTHER" id="PTHR45987">
    <property type="entry name" value="39S RIBOSOMAL PROTEIN L12"/>
    <property type="match status" value="1"/>
</dbReference>
<dbReference type="PANTHER" id="PTHR45987:SF4">
    <property type="entry name" value="LARGE RIBOSOMAL SUBUNIT PROTEIN BL12M"/>
    <property type="match status" value="1"/>
</dbReference>
<dbReference type="Pfam" id="PF00542">
    <property type="entry name" value="Ribosomal_L12"/>
    <property type="match status" value="1"/>
</dbReference>
<dbReference type="Pfam" id="PF16320">
    <property type="entry name" value="Ribosomal_L12_N"/>
    <property type="match status" value="1"/>
</dbReference>
<dbReference type="SUPFAM" id="SSF54736">
    <property type="entry name" value="ClpS-like"/>
    <property type="match status" value="1"/>
</dbReference>
<dbReference type="SUPFAM" id="SSF48300">
    <property type="entry name" value="Ribosomal protein L7/12, oligomerisation (N-terminal) domain"/>
    <property type="match status" value="1"/>
</dbReference>
<comment type="function">
    <text evidence="1">Forms part of the ribosomal stalk which helps the ribosome interact with GTP-bound translation factors. Is thus essential for accurate translation.</text>
</comment>
<comment type="subunit">
    <text evidence="1">Homodimer. Part of the ribosomal stalk of the 50S ribosomal subunit. Forms a multimeric L10(L12)X complex, where L10 forms an elongated spine to which 2 to 4 L12 dimers bind in a sequential fashion. Binds GTP-bound translation factors.</text>
</comment>
<comment type="similarity">
    <text evidence="1">Belongs to the bacterial ribosomal protein bL12 family.</text>
</comment>